<sequence>MAKAKIAVNGYGTIGKRVADAAQAQDDMEIIGISKTKPNYEAAVAHQLGYDIYAPAANLEAFEKAGMPAAGSIEEMVEKADVIVDCTPGGIGKSNKALYEKAGVKAIWQGGEDHELAGYSFNAVANYEGALGLDFVRVVSCNTTGLCRVIYPIDKAFGTKKVRVTLARRATDPNDIKKGPINAIVPDPIKLPSHHGPDVKTVIPHIDITSAAMKIPTTLMHVHTVNMELKNECTAEDVRQVLGSQSRVRFVGQGITSTAEIMEVARDIKRPRNDMWENCVWPDSITMHEGELYFFQAIHQESIVVPENVDAIRAMMELESDGAKSILKTNKAIGL</sequence>
<feature type="chain" id="PRO_0000145719" description="Glyceraldehyde-3-phosphate dehydrogenase 2">
    <location>
        <begin position="1"/>
        <end position="335"/>
    </location>
</feature>
<feature type="active site" description="Nucleophile" evidence="1">
    <location>
        <position position="141"/>
    </location>
</feature>
<feature type="binding site" evidence="1">
    <location>
        <begin position="13"/>
        <end position="14"/>
    </location>
    <ligand>
        <name>NAD(+)</name>
        <dbReference type="ChEBI" id="CHEBI:57540"/>
    </ligand>
</feature>
<feature type="binding site" evidence="1">
    <location>
        <position position="111"/>
    </location>
    <ligand>
        <name>NAD(+)</name>
        <dbReference type="ChEBI" id="CHEBI:57540"/>
    </ligand>
</feature>
<feature type="binding site" evidence="1">
    <location>
        <begin position="140"/>
        <end position="142"/>
    </location>
    <ligand>
        <name>D-glyceraldehyde 3-phosphate</name>
        <dbReference type="ChEBI" id="CHEBI:59776"/>
    </ligand>
</feature>
<feature type="binding site" evidence="1">
    <location>
        <position position="169"/>
    </location>
    <ligand>
        <name>NAD(+)</name>
        <dbReference type="ChEBI" id="CHEBI:57540"/>
    </ligand>
</feature>
<feature type="binding site" evidence="1">
    <location>
        <position position="171"/>
    </location>
    <ligand>
        <name>D-glyceraldehyde 3-phosphate</name>
        <dbReference type="ChEBI" id="CHEBI:59776"/>
    </ligand>
</feature>
<feature type="binding site" evidence="1">
    <location>
        <begin position="195"/>
        <end position="196"/>
    </location>
    <ligand>
        <name>D-glyceraldehyde 3-phosphate</name>
        <dbReference type="ChEBI" id="CHEBI:59776"/>
    </ligand>
</feature>
<feature type="binding site" evidence="1">
    <location>
        <position position="300"/>
    </location>
    <ligand>
        <name>NAD(+)</name>
        <dbReference type="ChEBI" id="CHEBI:57540"/>
    </ligand>
</feature>
<keyword id="KW-0963">Cytoplasm</keyword>
<keyword id="KW-0324">Glycolysis</keyword>
<keyword id="KW-0520">NAD</keyword>
<keyword id="KW-0521">NADP</keyword>
<keyword id="KW-0560">Oxidoreductase</keyword>
<keyword id="KW-1185">Reference proteome</keyword>
<protein>
    <recommendedName>
        <fullName>Glyceraldehyde-3-phosphate dehydrogenase 2</fullName>
        <shortName>GAPDH 2</shortName>
        <ecNumber>1.2.1.59</ecNumber>
    </recommendedName>
    <alternativeName>
        <fullName>NAD(P)-dependent glyceraldehyde-3-phosphate dehydrogenase 2</fullName>
    </alternativeName>
</protein>
<name>G3P2_METAC</name>
<gene>
    <name type="primary">gapB</name>
    <name type="ordered locus">MA_3345</name>
</gene>
<evidence type="ECO:0000250" key="1"/>
<evidence type="ECO:0000305" key="2"/>
<reference key="1">
    <citation type="journal article" date="2002" name="Genome Res.">
        <title>The genome of Methanosarcina acetivorans reveals extensive metabolic and physiological diversity.</title>
        <authorList>
            <person name="Galagan J.E."/>
            <person name="Nusbaum C."/>
            <person name="Roy A."/>
            <person name="Endrizzi M.G."/>
            <person name="Macdonald P."/>
            <person name="FitzHugh W."/>
            <person name="Calvo S."/>
            <person name="Engels R."/>
            <person name="Smirnov S."/>
            <person name="Atnoor D."/>
            <person name="Brown A."/>
            <person name="Allen N."/>
            <person name="Naylor J."/>
            <person name="Stange-Thomann N."/>
            <person name="DeArellano K."/>
            <person name="Johnson R."/>
            <person name="Linton L."/>
            <person name="McEwan P."/>
            <person name="McKernan K."/>
            <person name="Talamas J."/>
            <person name="Tirrell A."/>
            <person name="Ye W."/>
            <person name="Zimmer A."/>
            <person name="Barber R.D."/>
            <person name="Cann I."/>
            <person name="Graham D.E."/>
            <person name="Grahame D.A."/>
            <person name="Guss A.M."/>
            <person name="Hedderich R."/>
            <person name="Ingram-Smith C."/>
            <person name="Kuettner H.C."/>
            <person name="Krzycki J.A."/>
            <person name="Leigh J.A."/>
            <person name="Li W."/>
            <person name="Liu J."/>
            <person name="Mukhopadhyay B."/>
            <person name="Reeve J.N."/>
            <person name="Smith K."/>
            <person name="Springer T.A."/>
            <person name="Umayam L.A."/>
            <person name="White O."/>
            <person name="White R.H."/>
            <person name="de Macario E.C."/>
            <person name="Ferry J.G."/>
            <person name="Jarrell K.F."/>
            <person name="Jing H."/>
            <person name="Macario A.J.L."/>
            <person name="Paulsen I.T."/>
            <person name="Pritchett M."/>
            <person name="Sowers K.R."/>
            <person name="Swanson R.V."/>
            <person name="Zinder S.H."/>
            <person name="Lander E."/>
            <person name="Metcalf W.W."/>
            <person name="Birren B."/>
        </authorList>
    </citation>
    <scope>NUCLEOTIDE SEQUENCE [LARGE SCALE GENOMIC DNA]</scope>
    <source>
        <strain>ATCC 35395 / DSM 2834 / JCM 12185 / C2A</strain>
    </source>
</reference>
<comment type="catalytic activity">
    <reaction>
        <text>D-glyceraldehyde 3-phosphate + phosphate + NADP(+) = (2R)-3-phospho-glyceroyl phosphate + NADPH + H(+)</text>
        <dbReference type="Rhea" id="RHEA:10296"/>
        <dbReference type="ChEBI" id="CHEBI:15378"/>
        <dbReference type="ChEBI" id="CHEBI:43474"/>
        <dbReference type="ChEBI" id="CHEBI:57604"/>
        <dbReference type="ChEBI" id="CHEBI:57783"/>
        <dbReference type="ChEBI" id="CHEBI:58349"/>
        <dbReference type="ChEBI" id="CHEBI:59776"/>
        <dbReference type="EC" id="1.2.1.59"/>
    </reaction>
</comment>
<comment type="catalytic activity">
    <reaction>
        <text>D-glyceraldehyde 3-phosphate + phosphate + NAD(+) = (2R)-3-phospho-glyceroyl phosphate + NADH + H(+)</text>
        <dbReference type="Rhea" id="RHEA:10300"/>
        <dbReference type="ChEBI" id="CHEBI:15378"/>
        <dbReference type="ChEBI" id="CHEBI:43474"/>
        <dbReference type="ChEBI" id="CHEBI:57540"/>
        <dbReference type="ChEBI" id="CHEBI:57604"/>
        <dbReference type="ChEBI" id="CHEBI:57945"/>
        <dbReference type="ChEBI" id="CHEBI:59776"/>
        <dbReference type="EC" id="1.2.1.59"/>
    </reaction>
</comment>
<comment type="pathway">
    <text>Carbohydrate degradation; glycolysis; pyruvate from D-glyceraldehyde 3-phosphate: step 1/5.</text>
</comment>
<comment type="subunit">
    <text evidence="1">Homotetramer.</text>
</comment>
<comment type="subcellular location">
    <subcellularLocation>
        <location evidence="1">Cytoplasm</location>
    </subcellularLocation>
</comment>
<comment type="similarity">
    <text evidence="2">Belongs to the glyceraldehyde-3-phosphate dehydrogenase family.</text>
</comment>
<proteinExistence type="inferred from homology"/>
<accession>P58838</accession>
<organism>
    <name type="scientific">Methanosarcina acetivorans (strain ATCC 35395 / DSM 2834 / JCM 12185 / C2A)</name>
    <dbReference type="NCBI Taxonomy" id="188937"/>
    <lineage>
        <taxon>Archaea</taxon>
        <taxon>Methanobacteriati</taxon>
        <taxon>Methanobacteriota</taxon>
        <taxon>Stenosarchaea group</taxon>
        <taxon>Methanomicrobia</taxon>
        <taxon>Methanosarcinales</taxon>
        <taxon>Methanosarcinaceae</taxon>
        <taxon>Methanosarcina</taxon>
    </lineage>
</organism>
<dbReference type="EC" id="1.2.1.59"/>
<dbReference type="EMBL" id="AE010299">
    <property type="protein sequence ID" value="AAM06714.1"/>
    <property type="molecule type" value="Genomic_DNA"/>
</dbReference>
<dbReference type="RefSeq" id="WP_011023275.1">
    <property type="nucleotide sequence ID" value="NC_003552.1"/>
</dbReference>
<dbReference type="SMR" id="P58838"/>
<dbReference type="FunCoup" id="P58838">
    <property type="interactions" value="156"/>
</dbReference>
<dbReference type="STRING" id="188937.MA_3345"/>
<dbReference type="EnsemblBacteria" id="AAM06714">
    <property type="protein sequence ID" value="AAM06714"/>
    <property type="gene ID" value="MA_3345"/>
</dbReference>
<dbReference type="GeneID" id="1475238"/>
<dbReference type="KEGG" id="mac:MA_3345"/>
<dbReference type="HOGENOM" id="CLU_069533_0_0_2"/>
<dbReference type="InParanoid" id="P58838"/>
<dbReference type="OrthoDB" id="295712at2157"/>
<dbReference type="PhylomeDB" id="P58838"/>
<dbReference type="UniPathway" id="UPA00109">
    <property type="reaction ID" value="UER00184"/>
</dbReference>
<dbReference type="Proteomes" id="UP000002487">
    <property type="component" value="Chromosome"/>
</dbReference>
<dbReference type="GO" id="GO:0005737">
    <property type="term" value="C:cytoplasm"/>
    <property type="evidence" value="ECO:0007669"/>
    <property type="project" value="UniProtKB-SubCell"/>
</dbReference>
<dbReference type="GO" id="GO:0008839">
    <property type="term" value="F:4-hydroxy-tetrahydrodipicolinate reductase"/>
    <property type="evidence" value="ECO:0007669"/>
    <property type="project" value="InterPro"/>
</dbReference>
<dbReference type="GO" id="GO:0004365">
    <property type="term" value="F:glyceraldehyde-3-phosphate dehydrogenase (NAD+) (phosphorylating) activity"/>
    <property type="evidence" value="ECO:0007669"/>
    <property type="project" value="UniProtKB-UniRule"/>
</dbReference>
<dbReference type="GO" id="GO:0047100">
    <property type="term" value="F:glyceraldehyde-3-phosphate dehydrogenase (NADP+) (phosphorylating) activity"/>
    <property type="evidence" value="ECO:0007669"/>
    <property type="project" value="RHEA"/>
</dbReference>
<dbReference type="GO" id="GO:0051287">
    <property type="term" value="F:NAD binding"/>
    <property type="evidence" value="ECO:0007669"/>
    <property type="project" value="InterPro"/>
</dbReference>
<dbReference type="GO" id="GO:0050661">
    <property type="term" value="F:NADP binding"/>
    <property type="evidence" value="ECO:0007669"/>
    <property type="project" value="InterPro"/>
</dbReference>
<dbReference type="GO" id="GO:0006096">
    <property type="term" value="P:glycolytic process"/>
    <property type="evidence" value="ECO:0007669"/>
    <property type="project" value="UniProtKB-UniRule"/>
</dbReference>
<dbReference type="GO" id="GO:0009089">
    <property type="term" value="P:lysine biosynthetic process via diaminopimelate"/>
    <property type="evidence" value="ECO:0007669"/>
    <property type="project" value="InterPro"/>
</dbReference>
<dbReference type="CDD" id="cd18127">
    <property type="entry name" value="GAPDH_II_C"/>
    <property type="match status" value="1"/>
</dbReference>
<dbReference type="CDD" id="cd02278">
    <property type="entry name" value="GAPDH_II_N"/>
    <property type="match status" value="1"/>
</dbReference>
<dbReference type="Gene3D" id="3.30.360.10">
    <property type="entry name" value="Dihydrodipicolinate Reductase, domain 2"/>
    <property type="match status" value="1"/>
</dbReference>
<dbReference type="Gene3D" id="3.40.50.720">
    <property type="entry name" value="NAD(P)-binding Rossmann-like Domain"/>
    <property type="match status" value="1"/>
</dbReference>
<dbReference type="HAMAP" id="MF_00559">
    <property type="entry name" value="G3P_dehdrog_arch"/>
    <property type="match status" value="1"/>
</dbReference>
<dbReference type="InterPro" id="IPR000846">
    <property type="entry name" value="DapB_N"/>
</dbReference>
<dbReference type="InterPro" id="IPR020831">
    <property type="entry name" value="GlycerAld/Erythrose_P_DH"/>
</dbReference>
<dbReference type="InterPro" id="IPR020830">
    <property type="entry name" value="GlycerAld_3-P_DH_AS"/>
</dbReference>
<dbReference type="InterPro" id="IPR020829">
    <property type="entry name" value="GlycerAld_3-P_DH_cat"/>
</dbReference>
<dbReference type="InterPro" id="IPR020828">
    <property type="entry name" value="GlycerAld_3-P_DH_NAD(P)-bd"/>
</dbReference>
<dbReference type="InterPro" id="IPR006436">
    <property type="entry name" value="Glyceraldehyde-3-P_DH_2_arc"/>
</dbReference>
<dbReference type="InterPro" id="IPR036291">
    <property type="entry name" value="NAD(P)-bd_dom_sf"/>
</dbReference>
<dbReference type="NCBIfam" id="TIGR01546">
    <property type="entry name" value="GAPDH-II_archae"/>
    <property type="match status" value="1"/>
</dbReference>
<dbReference type="NCBIfam" id="NF003251">
    <property type="entry name" value="PRK04207.1"/>
    <property type="match status" value="1"/>
</dbReference>
<dbReference type="Pfam" id="PF01113">
    <property type="entry name" value="DapB_N"/>
    <property type="match status" value="1"/>
</dbReference>
<dbReference type="Pfam" id="PF02800">
    <property type="entry name" value="Gp_dh_C"/>
    <property type="match status" value="1"/>
</dbReference>
<dbReference type="PIRSF" id="PIRSF000149">
    <property type="entry name" value="GAP_DH"/>
    <property type="match status" value="1"/>
</dbReference>
<dbReference type="SMART" id="SM00846">
    <property type="entry name" value="Gp_dh_N"/>
    <property type="match status" value="1"/>
</dbReference>
<dbReference type="SUPFAM" id="SSF55347">
    <property type="entry name" value="Glyceraldehyde-3-phosphate dehydrogenase-like, C-terminal domain"/>
    <property type="match status" value="1"/>
</dbReference>
<dbReference type="SUPFAM" id="SSF51735">
    <property type="entry name" value="NAD(P)-binding Rossmann-fold domains"/>
    <property type="match status" value="1"/>
</dbReference>
<dbReference type="PROSITE" id="PS00071">
    <property type="entry name" value="GAPDH"/>
    <property type="match status" value="1"/>
</dbReference>